<name>FAF3_ARATH</name>
<accession>Q6NMR8</accession>
<dbReference type="EMBL" id="AC069326">
    <property type="status" value="NOT_ANNOTATED_CDS"/>
    <property type="molecule type" value="Genomic_DNA"/>
</dbReference>
<dbReference type="EMBL" id="AF296837">
    <property type="status" value="NOT_ANNOTATED_CDS"/>
    <property type="molecule type" value="Genomic_DNA"/>
</dbReference>
<dbReference type="EMBL" id="CP002688">
    <property type="protein sequence ID" value="AED92677.1"/>
    <property type="molecule type" value="Genomic_DNA"/>
</dbReference>
<dbReference type="EMBL" id="BT010757">
    <property type="protein sequence ID" value="AAR23727.1"/>
    <property type="molecule type" value="mRNA"/>
</dbReference>
<dbReference type="EMBL" id="BT011588">
    <property type="protein sequence ID" value="AAS46641.1"/>
    <property type="molecule type" value="mRNA"/>
</dbReference>
<dbReference type="RefSeq" id="NP_197427.1">
    <property type="nucleotide sequence ID" value="NM_121931.4"/>
</dbReference>
<dbReference type="FunCoup" id="Q6NMR8">
    <property type="interactions" value="59"/>
</dbReference>
<dbReference type="STRING" id="3702.Q6NMR8"/>
<dbReference type="PaxDb" id="3702-AT5G19260.1"/>
<dbReference type="EnsemblPlants" id="AT5G19260.1">
    <property type="protein sequence ID" value="AT5G19260.1"/>
    <property type="gene ID" value="AT5G19260"/>
</dbReference>
<dbReference type="GeneID" id="832046"/>
<dbReference type="Gramene" id="AT5G19260.1">
    <property type="protein sequence ID" value="AT5G19260.1"/>
    <property type="gene ID" value="AT5G19260"/>
</dbReference>
<dbReference type="KEGG" id="ath:AT5G19260"/>
<dbReference type="Araport" id="AT5G19260"/>
<dbReference type="TAIR" id="AT5G19260">
    <property type="gene designation" value="FAF3"/>
</dbReference>
<dbReference type="eggNOG" id="ENOG502QVU6">
    <property type="taxonomic scope" value="Eukaryota"/>
</dbReference>
<dbReference type="HOGENOM" id="CLU_053779_0_0_1"/>
<dbReference type="InParanoid" id="Q6NMR8"/>
<dbReference type="OMA" id="PDMGGWS"/>
<dbReference type="OrthoDB" id="1916983at2759"/>
<dbReference type="PhylomeDB" id="Q6NMR8"/>
<dbReference type="PRO" id="PR:Q6NMR8"/>
<dbReference type="Proteomes" id="UP000006548">
    <property type="component" value="Chromosome 5"/>
</dbReference>
<dbReference type="ExpressionAtlas" id="Q6NMR8">
    <property type="expression patterns" value="baseline and differential"/>
</dbReference>
<dbReference type="InterPro" id="IPR021410">
    <property type="entry name" value="FAF"/>
</dbReference>
<dbReference type="InterPro" id="IPR046431">
    <property type="entry name" value="FAF_dom"/>
</dbReference>
<dbReference type="PANTHER" id="PTHR33155">
    <property type="entry name" value="FANTASTIC FOUR-LIKE PROTEIN (DUF3049)"/>
    <property type="match status" value="1"/>
</dbReference>
<dbReference type="PANTHER" id="PTHR33155:SF4">
    <property type="entry name" value="PROTEIN FANTASTIC FOUR 3"/>
    <property type="match status" value="1"/>
</dbReference>
<dbReference type="Pfam" id="PF11250">
    <property type="entry name" value="FAF"/>
    <property type="match status" value="1"/>
</dbReference>
<protein>
    <recommendedName>
        <fullName>Protein FANTASTIC FOUR 3</fullName>
    </recommendedName>
</protein>
<gene>
    <name type="primary">FAF3</name>
    <name type="ordered locus">At5g19260</name>
    <name type="ORF">F7K24.10</name>
</gene>
<evidence type="ECO:0000256" key="1">
    <source>
        <dbReference type="SAM" id="MobiDB-lite"/>
    </source>
</evidence>
<evidence type="ECO:0000269" key="2">
    <source>
    </source>
</evidence>
<evidence type="ECO:0000305" key="3"/>
<feature type="chain" id="PRO_0000405262" description="Protein FANTASTIC FOUR 3">
    <location>
        <begin position="1"/>
        <end position="288"/>
    </location>
</feature>
<feature type="domain" description="FAF">
    <location>
        <begin position="165"/>
        <end position="217"/>
    </location>
</feature>
<feature type="region of interest" description="Disordered" evidence="1">
    <location>
        <begin position="48"/>
        <end position="100"/>
    </location>
</feature>
<feature type="region of interest" description="Disordered" evidence="1">
    <location>
        <begin position="146"/>
        <end position="172"/>
    </location>
</feature>
<feature type="region of interest" description="Disordered" evidence="1">
    <location>
        <begin position="222"/>
        <end position="261"/>
    </location>
</feature>
<feature type="compositionally biased region" description="Basic and acidic residues" evidence="1">
    <location>
        <begin position="48"/>
        <end position="60"/>
    </location>
</feature>
<feature type="compositionally biased region" description="Low complexity" evidence="1">
    <location>
        <begin position="66"/>
        <end position="90"/>
    </location>
</feature>
<feature type="compositionally biased region" description="Acidic residues" evidence="1">
    <location>
        <begin position="223"/>
        <end position="256"/>
    </location>
</feature>
<proteinExistence type="evidence at transcript level"/>
<reference key="1">
    <citation type="journal article" date="2000" name="Nature">
        <title>Sequence and analysis of chromosome 5 of the plant Arabidopsis thaliana.</title>
        <authorList>
            <person name="Tabata S."/>
            <person name="Kaneko T."/>
            <person name="Nakamura Y."/>
            <person name="Kotani H."/>
            <person name="Kato T."/>
            <person name="Asamizu E."/>
            <person name="Miyajima N."/>
            <person name="Sasamoto S."/>
            <person name="Kimura T."/>
            <person name="Hosouchi T."/>
            <person name="Kawashima K."/>
            <person name="Kohara M."/>
            <person name="Matsumoto M."/>
            <person name="Matsuno A."/>
            <person name="Muraki A."/>
            <person name="Nakayama S."/>
            <person name="Nakazaki N."/>
            <person name="Naruo K."/>
            <person name="Okumura S."/>
            <person name="Shinpo S."/>
            <person name="Takeuchi C."/>
            <person name="Wada T."/>
            <person name="Watanabe A."/>
            <person name="Yamada M."/>
            <person name="Yasuda M."/>
            <person name="Sato S."/>
            <person name="de la Bastide M."/>
            <person name="Huang E."/>
            <person name="Spiegel L."/>
            <person name="Gnoj L."/>
            <person name="O'Shaughnessy A."/>
            <person name="Preston R."/>
            <person name="Habermann K."/>
            <person name="Murray J."/>
            <person name="Johnson D."/>
            <person name="Rohlfing T."/>
            <person name="Nelson J."/>
            <person name="Stoneking T."/>
            <person name="Pepin K."/>
            <person name="Spieth J."/>
            <person name="Sekhon M."/>
            <person name="Armstrong J."/>
            <person name="Becker M."/>
            <person name="Belter E."/>
            <person name="Cordum H."/>
            <person name="Cordes M."/>
            <person name="Courtney L."/>
            <person name="Courtney W."/>
            <person name="Dante M."/>
            <person name="Du H."/>
            <person name="Edwards J."/>
            <person name="Fryman J."/>
            <person name="Haakensen B."/>
            <person name="Lamar E."/>
            <person name="Latreille P."/>
            <person name="Leonard S."/>
            <person name="Meyer R."/>
            <person name="Mulvaney E."/>
            <person name="Ozersky P."/>
            <person name="Riley A."/>
            <person name="Strowmatt C."/>
            <person name="Wagner-McPherson C."/>
            <person name="Wollam A."/>
            <person name="Yoakum M."/>
            <person name="Bell M."/>
            <person name="Dedhia N."/>
            <person name="Parnell L."/>
            <person name="Shah R."/>
            <person name="Rodriguez M."/>
            <person name="Hoon See L."/>
            <person name="Vil D."/>
            <person name="Baker J."/>
            <person name="Kirchoff K."/>
            <person name="Toth K."/>
            <person name="King L."/>
            <person name="Bahret A."/>
            <person name="Miller B."/>
            <person name="Marra M.A."/>
            <person name="Martienssen R."/>
            <person name="McCombie W.R."/>
            <person name="Wilson R.K."/>
            <person name="Murphy G."/>
            <person name="Bancroft I."/>
            <person name="Volckaert G."/>
            <person name="Wambutt R."/>
            <person name="Duesterhoeft A."/>
            <person name="Stiekema W."/>
            <person name="Pohl T."/>
            <person name="Entian K.-D."/>
            <person name="Terryn N."/>
            <person name="Hartley N."/>
            <person name="Bent E."/>
            <person name="Johnson S."/>
            <person name="Langham S.-A."/>
            <person name="McCullagh B."/>
            <person name="Robben J."/>
            <person name="Grymonprez B."/>
            <person name="Zimmermann W."/>
            <person name="Ramsperger U."/>
            <person name="Wedler H."/>
            <person name="Balke K."/>
            <person name="Wedler E."/>
            <person name="Peters S."/>
            <person name="van Staveren M."/>
            <person name="Dirkse W."/>
            <person name="Mooijman P."/>
            <person name="Klein Lankhorst R."/>
            <person name="Weitzenegger T."/>
            <person name="Bothe G."/>
            <person name="Rose M."/>
            <person name="Hauf J."/>
            <person name="Berneiser S."/>
            <person name="Hempel S."/>
            <person name="Feldpausch M."/>
            <person name="Lamberth S."/>
            <person name="Villarroel R."/>
            <person name="Gielen J."/>
            <person name="Ardiles W."/>
            <person name="Bents O."/>
            <person name="Lemcke K."/>
            <person name="Kolesov G."/>
            <person name="Mayer K.F.X."/>
            <person name="Rudd S."/>
            <person name="Schoof H."/>
            <person name="Schueller C."/>
            <person name="Zaccaria P."/>
            <person name="Mewes H.-W."/>
            <person name="Bevan M."/>
            <person name="Fransz P.F."/>
        </authorList>
    </citation>
    <scope>NUCLEOTIDE SEQUENCE [LARGE SCALE GENOMIC DNA]</scope>
    <source>
        <strain>cv. Columbia</strain>
    </source>
</reference>
<reference key="2">
    <citation type="journal article" date="2017" name="Plant J.">
        <title>Araport11: a complete reannotation of the Arabidopsis thaliana reference genome.</title>
        <authorList>
            <person name="Cheng C.Y."/>
            <person name="Krishnakumar V."/>
            <person name="Chan A.P."/>
            <person name="Thibaud-Nissen F."/>
            <person name="Schobel S."/>
            <person name="Town C.D."/>
        </authorList>
    </citation>
    <scope>GENOME REANNOTATION</scope>
    <source>
        <strain>cv. Columbia</strain>
    </source>
</reference>
<reference key="3">
    <citation type="submission" date="2003-11" db="EMBL/GenBank/DDBJ databases">
        <title>Arabidopsis ORF clones.</title>
        <authorList>
            <person name="Cheuk R."/>
            <person name="Chen H."/>
            <person name="Kim C.J."/>
            <person name="Shinn P."/>
            <person name="Ecker J.R."/>
        </authorList>
    </citation>
    <scope>NUCLEOTIDE SEQUENCE [LARGE SCALE MRNA]</scope>
    <source>
        <strain>cv. Columbia</strain>
    </source>
</reference>
<reference key="4">
    <citation type="submission" date="2004-02" db="EMBL/GenBank/DDBJ databases">
        <title>Arabidopsis ORF clones.</title>
        <authorList>
            <person name="Shinn P."/>
            <person name="Chen H."/>
            <person name="Cheuk R."/>
            <person name="Kim C.J."/>
            <person name="Ecker J.R."/>
        </authorList>
    </citation>
    <scope>NUCLEOTIDE SEQUENCE [LARGE SCALE MRNA]</scope>
    <source>
        <strain>cv. Columbia</strain>
    </source>
</reference>
<reference key="5">
    <citation type="journal article" date="2010" name="BMC Plant Biol.">
        <title>The FANTASTIC FOUR proteins influence shoot meristem size in Arabidopsis thaliana.</title>
        <authorList>
            <person name="Wahl V."/>
            <person name="Brand L.H."/>
            <person name="Guo Y.L."/>
            <person name="Schmid M."/>
        </authorList>
    </citation>
    <scope>FUNCTION</scope>
    <scope>DEVELOPMENTAL STAGE</scope>
    <scope>TISSUE SPECIFICITY</scope>
    <scope>DISRUPTION PHENOTYPE</scope>
    <source>
        <strain>cv. Columbia</strain>
    </source>
</reference>
<organism>
    <name type="scientific">Arabidopsis thaliana</name>
    <name type="common">Mouse-ear cress</name>
    <dbReference type="NCBI Taxonomy" id="3702"/>
    <lineage>
        <taxon>Eukaryota</taxon>
        <taxon>Viridiplantae</taxon>
        <taxon>Streptophyta</taxon>
        <taxon>Embryophyta</taxon>
        <taxon>Tracheophyta</taxon>
        <taxon>Spermatophyta</taxon>
        <taxon>Magnoliopsida</taxon>
        <taxon>eudicotyledons</taxon>
        <taxon>Gunneridae</taxon>
        <taxon>Pentapetalae</taxon>
        <taxon>rosids</taxon>
        <taxon>malvids</taxon>
        <taxon>Brassicales</taxon>
        <taxon>Brassicaceae</taxon>
        <taxon>Camelineae</taxon>
        <taxon>Arabidopsis</taxon>
    </lineage>
</organism>
<sequence>MGTVVYQQGFQSQLNEPRALRLRLSSPNPHFSQPFGLALKSHLLDSSHAEDTRNRNDDKAAASPVSDSSGWSSLQSLSSGSSSSTKTTTSSEKESSYYVQRPSSCRALSDQSLALCTENLGSESGSDVTDIDELFSLDVQTKNLGETTTETRTLKSRKRSVSPSDLPPPLTTMRGFQCIQMRPHRENGRLVMTATNAPPRNGCFQADRSNGRLRLSILKDSNEFVENEEETIEPEETEEYEEEEEEEEDEDEDEVMGIENVQVSRRCVQGDRENRGLLNWESFCVATS</sequence>
<comment type="function">
    <text evidence="2">Able to repress WUS when constitutively overexpressed, but have no effect on CLV3.</text>
</comment>
<comment type="tissue specificity">
    <text evidence="2">Expressed in the shoot apex, stamens, young leaves and young siliques, but not in old leaves. Detected in provascular and vascular tissue, but not in the vegetative meristem. In inflorescences, restricted to the vasculature and absent from young flowers, except from anthers.</text>
</comment>
<comment type="developmental stage">
    <text evidence="2">Expressed throughout development. Decreased expression in the shoot apex during the transition to flowering. Expressed in developing embryos from the early heart stage until torpedo stage.</text>
</comment>
<comment type="disruption phenotype">
    <text evidence="2">No visible phenotype; due to the redundancy with other FAF genes.</text>
</comment>
<comment type="similarity">
    <text evidence="3">Belongs to the fantastic four family.</text>
</comment>
<keyword id="KW-1185">Reference proteome</keyword>